<evidence type="ECO:0000250" key="1">
    <source>
        <dbReference type="UniProtKB" id="P50389"/>
    </source>
</evidence>
<evidence type="ECO:0000255" key="2">
    <source>
        <dbReference type="HAMAP-Rule" id="MF_01627"/>
    </source>
</evidence>
<comment type="function">
    <text evidence="2">Catalyzes the reversible phosphorolytic breakdown of the N-glycosidic bond in the beta-(deoxy)ribonucleoside molecules, with the formation of the corresponding free purine bases and pentose-1-phosphate.</text>
</comment>
<comment type="catalytic activity">
    <reaction evidence="2">
        <text>a purine D-ribonucleoside + phosphate = a purine nucleobase + alpha-D-ribose 1-phosphate</text>
        <dbReference type="Rhea" id="RHEA:19805"/>
        <dbReference type="ChEBI" id="CHEBI:26386"/>
        <dbReference type="ChEBI" id="CHEBI:43474"/>
        <dbReference type="ChEBI" id="CHEBI:57720"/>
        <dbReference type="ChEBI" id="CHEBI:142355"/>
        <dbReference type="EC" id="2.4.2.1"/>
    </reaction>
</comment>
<comment type="catalytic activity">
    <reaction evidence="2">
        <text>a purine 2'-deoxy-D-ribonucleoside + phosphate = a purine nucleobase + 2-deoxy-alpha-D-ribose 1-phosphate</text>
        <dbReference type="Rhea" id="RHEA:36431"/>
        <dbReference type="ChEBI" id="CHEBI:26386"/>
        <dbReference type="ChEBI" id="CHEBI:43474"/>
        <dbReference type="ChEBI" id="CHEBI:57259"/>
        <dbReference type="ChEBI" id="CHEBI:142361"/>
        <dbReference type="EC" id="2.4.2.1"/>
    </reaction>
</comment>
<comment type="subunit">
    <text evidence="2">Homohexamer; trimer of homodimers.</text>
</comment>
<comment type="similarity">
    <text evidence="2">Belongs to the PNP/UDP phosphorylase family.</text>
</comment>
<organism>
    <name type="scientific">Shewanella denitrificans (strain OS217 / ATCC BAA-1090 / DSM 15013)</name>
    <dbReference type="NCBI Taxonomy" id="318161"/>
    <lineage>
        <taxon>Bacteria</taxon>
        <taxon>Pseudomonadati</taxon>
        <taxon>Pseudomonadota</taxon>
        <taxon>Gammaproteobacteria</taxon>
        <taxon>Alteromonadales</taxon>
        <taxon>Shewanellaceae</taxon>
        <taxon>Shewanella</taxon>
    </lineage>
</organism>
<reference key="1">
    <citation type="submission" date="2006-03" db="EMBL/GenBank/DDBJ databases">
        <title>Complete sequence of Shewanella denitrificans OS217.</title>
        <authorList>
            <consortium name="US DOE Joint Genome Institute"/>
            <person name="Copeland A."/>
            <person name="Lucas S."/>
            <person name="Lapidus A."/>
            <person name="Barry K."/>
            <person name="Detter J.C."/>
            <person name="Glavina del Rio T."/>
            <person name="Hammon N."/>
            <person name="Israni S."/>
            <person name="Dalin E."/>
            <person name="Tice H."/>
            <person name="Pitluck S."/>
            <person name="Brettin T."/>
            <person name="Bruce D."/>
            <person name="Han C."/>
            <person name="Tapia R."/>
            <person name="Gilna P."/>
            <person name="Kiss H."/>
            <person name="Schmutz J."/>
            <person name="Larimer F."/>
            <person name="Land M."/>
            <person name="Hauser L."/>
            <person name="Kyrpides N."/>
            <person name="Lykidis A."/>
            <person name="Richardson P."/>
        </authorList>
    </citation>
    <scope>NUCLEOTIDE SEQUENCE [LARGE SCALE GENOMIC DNA]</scope>
    <source>
        <strain>OS217 / ATCC BAA-1090 / DSM 15013</strain>
    </source>
</reference>
<dbReference type="EC" id="2.4.2.1" evidence="2"/>
<dbReference type="EMBL" id="CP000302">
    <property type="protein sequence ID" value="ABE54316.1"/>
    <property type="molecule type" value="Genomic_DNA"/>
</dbReference>
<dbReference type="RefSeq" id="WP_011495480.1">
    <property type="nucleotide sequence ID" value="NC_007954.1"/>
</dbReference>
<dbReference type="SMR" id="Q12QG0"/>
<dbReference type="STRING" id="318161.Sden_1028"/>
<dbReference type="KEGG" id="sdn:Sden_1028"/>
<dbReference type="eggNOG" id="COG0813">
    <property type="taxonomic scope" value="Bacteria"/>
</dbReference>
<dbReference type="HOGENOM" id="CLU_068457_2_0_6"/>
<dbReference type="OrthoDB" id="9782889at2"/>
<dbReference type="Proteomes" id="UP000001982">
    <property type="component" value="Chromosome"/>
</dbReference>
<dbReference type="GO" id="GO:0005829">
    <property type="term" value="C:cytosol"/>
    <property type="evidence" value="ECO:0007669"/>
    <property type="project" value="TreeGrafter"/>
</dbReference>
<dbReference type="GO" id="GO:0004731">
    <property type="term" value="F:purine-nucleoside phosphorylase activity"/>
    <property type="evidence" value="ECO:0007669"/>
    <property type="project" value="UniProtKB-UniRule"/>
</dbReference>
<dbReference type="GO" id="GO:0006152">
    <property type="term" value="P:purine nucleoside catabolic process"/>
    <property type="evidence" value="ECO:0007669"/>
    <property type="project" value="TreeGrafter"/>
</dbReference>
<dbReference type="CDD" id="cd09006">
    <property type="entry name" value="PNP_EcPNPI-like"/>
    <property type="match status" value="1"/>
</dbReference>
<dbReference type="Gene3D" id="3.40.50.1580">
    <property type="entry name" value="Nucleoside phosphorylase domain"/>
    <property type="match status" value="1"/>
</dbReference>
<dbReference type="HAMAP" id="MF_01627">
    <property type="entry name" value="Pur_nucleosid_phosp"/>
    <property type="match status" value="1"/>
</dbReference>
<dbReference type="InterPro" id="IPR004402">
    <property type="entry name" value="DeoD-type"/>
</dbReference>
<dbReference type="InterPro" id="IPR018016">
    <property type="entry name" value="Nucleoside_phosphorylase_CS"/>
</dbReference>
<dbReference type="InterPro" id="IPR000845">
    <property type="entry name" value="Nucleoside_phosphorylase_d"/>
</dbReference>
<dbReference type="InterPro" id="IPR035994">
    <property type="entry name" value="Nucleoside_phosphorylase_sf"/>
</dbReference>
<dbReference type="NCBIfam" id="TIGR00107">
    <property type="entry name" value="deoD"/>
    <property type="match status" value="1"/>
</dbReference>
<dbReference type="NCBIfam" id="NF004489">
    <property type="entry name" value="PRK05819.1"/>
    <property type="match status" value="1"/>
</dbReference>
<dbReference type="NCBIfam" id="NF009914">
    <property type="entry name" value="PRK13374.1"/>
    <property type="match status" value="1"/>
</dbReference>
<dbReference type="PANTHER" id="PTHR43691:SF2">
    <property type="entry name" value="PURINE NUCLEOSIDE PHOSPHORYLASE DEOD-TYPE"/>
    <property type="match status" value="1"/>
</dbReference>
<dbReference type="PANTHER" id="PTHR43691">
    <property type="entry name" value="URIDINE PHOSPHORYLASE"/>
    <property type="match status" value="1"/>
</dbReference>
<dbReference type="Pfam" id="PF01048">
    <property type="entry name" value="PNP_UDP_1"/>
    <property type="match status" value="1"/>
</dbReference>
<dbReference type="SUPFAM" id="SSF53167">
    <property type="entry name" value="Purine and uridine phosphorylases"/>
    <property type="match status" value="1"/>
</dbReference>
<dbReference type="PROSITE" id="PS01232">
    <property type="entry name" value="PNP_UDP_1"/>
    <property type="match status" value="1"/>
</dbReference>
<protein>
    <recommendedName>
        <fullName evidence="2">Purine nucleoside phosphorylase DeoD-type</fullName>
        <shortName evidence="2">PNP</shortName>
        <ecNumber evidence="2">2.4.2.1</ecNumber>
    </recommendedName>
</protein>
<sequence>MATPHINAVPGAFAETMLFPGDPLRAKYIAETFLENVEQVTDVRNMLGFTGTYKGKRISVMGSGMGIPSASIYAYELIKEYGVKNLIRVGTCGAISTDVKVRDVIIAMGACTDSKVNRLRFKDHDFAAIADYSLLSAVVDSAKEHGTQIRVGNVFSADLFYTPDPQMFDVMEKMGVLGVEMEAAGLYGVAHELGAKALCVVTVSDHIRTGEKTTSDERQTTFNDMIIMTLDAAITL</sequence>
<name>DEOD_SHEDO</name>
<keyword id="KW-0328">Glycosyltransferase</keyword>
<keyword id="KW-1185">Reference proteome</keyword>
<keyword id="KW-0808">Transferase</keyword>
<accession>Q12QG0</accession>
<proteinExistence type="inferred from homology"/>
<feature type="chain" id="PRO_1000069643" description="Purine nucleoside phosphorylase DeoD-type">
    <location>
        <begin position="1"/>
        <end position="236"/>
    </location>
</feature>
<feature type="active site" description="Proton donor" evidence="2">
    <location>
        <position position="205"/>
    </location>
</feature>
<feature type="binding site" evidence="1">
    <location>
        <position position="5"/>
    </location>
    <ligand>
        <name>a purine D-ribonucleoside</name>
        <dbReference type="ChEBI" id="CHEBI:142355"/>
        <note>ligand shared between dimeric partners</note>
    </ligand>
</feature>
<feature type="binding site" description="in other chain" evidence="1">
    <location>
        <position position="21"/>
    </location>
    <ligand>
        <name>phosphate</name>
        <dbReference type="ChEBI" id="CHEBI:43474"/>
        <note>ligand shared between dimeric partners</note>
    </ligand>
</feature>
<feature type="binding site" description="in other chain" evidence="1">
    <location>
        <position position="25"/>
    </location>
    <ligand>
        <name>phosphate</name>
        <dbReference type="ChEBI" id="CHEBI:43474"/>
        <note>ligand shared between dimeric partners</note>
    </ligand>
</feature>
<feature type="binding site" evidence="1">
    <location>
        <position position="44"/>
    </location>
    <ligand>
        <name>phosphate</name>
        <dbReference type="ChEBI" id="CHEBI:43474"/>
        <note>ligand shared between dimeric partners</note>
    </ligand>
</feature>
<feature type="binding site" description="in other chain" evidence="1">
    <location>
        <begin position="88"/>
        <end position="91"/>
    </location>
    <ligand>
        <name>phosphate</name>
        <dbReference type="ChEBI" id="CHEBI:43474"/>
        <note>ligand shared between dimeric partners</note>
    </ligand>
</feature>
<feature type="binding site" description="in other chain" evidence="1">
    <location>
        <begin position="180"/>
        <end position="182"/>
    </location>
    <ligand>
        <name>a purine D-ribonucleoside</name>
        <dbReference type="ChEBI" id="CHEBI:142355"/>
        <note>ligand shared between dimeric partners</note>
    </ligand>
</feature>
<feature type="binding site" description="in other chain" evidence="1">
    <location>
        <begin position="204"/>
        <end position="205"/>
    </location>
    <ligand>
        <name>a purine D-ribonucleoside</name>
        <dbReference type="ChEBI" id="CHEBI:142355"/>
        <note>ligand shared between dimeric partners</note>
    </ligand>
</feature>
<feature type="site" description="Important for catalytic activity" evidence="2">
    <location>
        <position position="218"/>
    </location>
</feature>
<gene>
    <name evidence="2" type="primary">deoD</name>
    <name type="ordered locus">Sden_1028</name>
</gene>